<comment type="subcellular location">
    <subcellularLocation>
        <location evidence="1">Vacuole</location>
    </subcellularLocation>
</comment>
<keyword id="KW-1185">Reference proteome</keyword>
<keyword id="KW-0732">Signal</keyword>
<keyword id="KW-0926">Vacuole</keyword>
<evidence type="ECO:0000250" key="1"/>
<evidence type="ECO:0000255" key="2"/>
<evidence type="ECO:0000255" key="3">
    <source>
        <dbReference type="PROSITE-ProRule" id="PRU00082"/>
    </source>
</evidence>
<accession>Q755Y4</accession>
<name>YFAS1_EREGS</name>
<dbReference type="EMBL" id="AE016818">
    <property type="protein sequence ID" value="AAS53063.2"/>
    <property type="molecule type" value="Genomic_DNA"/>
</dbReference>
<dbReference type="RefSeq" id="NP_985239.2">
    <property type="nucleotide sequence ID" value="NM_210593.2"/>
</dbReference>
<dbReference type="SMR" id="Q755Y4"/>
<dbReference type="FunCoup" id="Q755Y4">
    <property type="interactions" value="18"/>
</dbReference>
<dbReference type="STRING" id="284811.Q755Y4"/>
<dbReference type="EnsemblFungi" id="AAS53063">
    <property type="protein sequence ID" value="AAS53063"/>
    <property type="gene ID" value="AGOS_AER383W"/>
</dbReference>
<dbReference type="GeneID" id="4621455"/>
<dbReference type="KEGG" id="ago:AGOS_AER383W"/>
<dbReference type="eggNOG" id="ENOG502S5NC">
    <property type="taxonomic scope" value="Eukaryota"/>
</dbReference>
<dbReference type="HOGENOM" id="CLU_076942_0_0_1"/>
<dbReference type="InParanoid" id="Q755Y4"/>
<dbReference type="OMA" id="IDSCLEW"/>
<dbReference type="OrthoDB" id="5551751at2759"/>
<dbReference type="Proteomes" id="UP000000591">
    <property type="component" value="Chromosome V"/>
</dbReference>
<dbReference type="GO" id="GO:0005773">
    <property type="term" value="C:vacuole"/>
    <property type="evidence" value="ECO:0007669"/>
    <property type="project" value="UniProtKB-SubCell"/>
</dbReference>
<dbReference type="Gene3D" id="2.30.180.10">
    <property type="entry name" value="FAS1 domain"/>
    <property type="match status" value="1"/>
</dbReference>
<dbReference type="InterPro" id="IPR036378">
    <property type="entry name" value="FAS1_dom_sf"/>
</dbReference>
<dbReference type="InterPro" id="IPR000782">
    <property type="entry name" value="FAS1_domain"/>
</dbReference>
<dbReference type="InterPro" id="IPR040200">
    <property type="entry name" value="Mug57-like"/>
</dbReference>
<dbReference type="PANTHER" id="PTHR28156">
    <property type="entry name" value="FAS1 DOMAIN-CONTAINING PROTEIN YDR262W"/>
    <property type="match status" value="1"/>
</dbReference>
<dbReference type="PANTHER" id="PTHR28156:SF1">
    <property type="entry name" value="FAS1 DOMAIN-CONTAINING PROTEIN YDR262W"/>
    <property type="match status" value="1"/>
</dbReference>
<dbReference type="Pfam" id="PF02469">
    <property type="entry name" value="Fasciclin"/>
    <property type="match status" value="1"/>
</dbReference>
<dbReference type="SUPFAM" id="SSF82153">
    <property type="entry name" value="FAS1 domain"/>
    <property type="match status" value="1"/>
</dbReference>
<dbReference type="PROSITE" id="PS50213">
    <property type="entry name" value="FAS1"/>
    <property type="match status" value="1"/>
</dbReference>
<protein>
    <recommendedName>
        <fullName>FAS1 domain-containing protein AER383W</fullName>
    </recommendedName>
</protein>
<organism>
    <name type="scientific">Eremothecium gossypii (strain ATCC 10895 / CBS 109.51 / FGSC 9923 / NRRL Y-1056)</name>
    <name type="common">Yeast</name>
    <name type="synonym">Ashbya gossypii</name>
    <dbReference type="NCBI Taxonomy" id="284811"/>
    <lineage>
        <taxon>Eukaryota</taxon>
        <taxon>Fungi</taxon>
        <taxon>Dikarya</taxon>
        <taxon>Ascomycota</taxon>
        <taxon>Saccharomycotina</taxon>
        <taxon>Saccharomycetes</taxon>
        <taxon>Saccharomycetales</taxon>
        <taxon>Saccharomycetaceae</taxon>
        <taxon>Eremothecium</taxon>
    </lineage>
</organism>
<proteinExistence type="inferred from homology"/>
<reference key="1">
    <citation type="journal article" date="2004" name="Science">
        <title>The Ashbya gossypii genome as a tool for mapping the ancient Saccharomyces cerevisiae genome.</title>
        <authorList>
            <person name="Dietrich F.S."/>
            <person name="Voegeli S."/>
            <person name="Brachat S."/>
            <person name="Lerch A."/>
            <person name="Gates K."/>
            <person name="Steiner S."/>
            <person name="Mohr C."/>
            <person name="Poehlmann R."/>
            <person name="Luedi P."/>
            <person name="Choi S."/>
            <person name="Wing R.A."/>
            <person name="Flavier A."/>
            <person name="Gaffney T.D."/>
            <person name="Philippsen P."/>
        </authorList>
    </citation>
    <scope>NUCLEOTIDE SEQUENCE [LARGE SCALE GENOMIC DNA]</scope>
    <source>
        <strain>ATCC 10895 / CBS 109.51 / FGSC 9923 / NRRL Y-1056</strain>
    </source>
</reference>
<reference key="2">
    <citation type="journal article" date="2013" name="G3 (Bethesda)">
        <title>Genomes of Ashbya fungi isolated from insects reveal four mating-type loci, numerous translocations, lack of transposons, and distinct gene duplications.</title>
        <authorList>
            <person name="Dietrich F.S."/>
            <person name="Voegeli S."/>
            <person name="Kuo S."/>
            <person name="Philippsen P."/>
        </authorList>
    </citation>
    <scope>GENOME REANNOTATION</scope>
    <scope>SEQUENCE REVISION TO 26-27 AND 242</scope>
    <source>
        <strain>ATCC 10895 / CBS 109.51 / FGSC 9923 / NRRL Y-1056</strain>
    </source>
</reference>
<sequence>MRLKTILLGFCAFHVARSKMVVNLINMIDEQTGEQRKVVPLELERFFPLDFDEILLRDTMQRNAAMEEEDYRELGKRDIEVAFQNTGVTLDDRLQSLPAISLFGRYVRDIDGMSEALADGDRHIMVFAPTNDAITAMPKKPWEYPRNIDKLEQAGASASEIHDAIQANVRRFVLTHVVSDIDLSKVGREDGSAVLTSDLHPKSMQGDILLRKDGDRYTVSSKTGRDLAVEEVHTASNGIVLVIDSSLDAE</sequence>
<feature type="signal peptide" evidence="2">
    <location>
        <begin position="1"/>
        <end position="18"/>
    </location>
</feature>
<feature type="chain" id="PRO_0000008791" description="FAS1 domain-containing protein AER383W">
    <location>
        <begin position="19"/>
        <end position="250"/>
    </location>
</feature>
<feature type="domain" description="FAS1" evidence="3">
    <location>
        <begin position="87"/>
        <end position="247"/>
    </location>
</feature>
<gene>
    <name type="ordered locus">AER383W</name>
</gene>